<dbReference type="EMBL" id="AM689309">
    <property type="protein sequence ID" value="CAM84584.2"/>
    <property type="molecule type" value="Genomic_RNA"/>
</dbReference>
<dbReference type="RefSeq" id="YP_003126908.1">
    <property type="nucleotide sequence ID" value="NC_013135.1"/>
</dbReference>
<dbReference type="SMR" id="A7WNA9"/>
<dbReference type="GeneID" id="8363507"/>
<dbReference type="KEGG" id="vg:8363507"/>
<dbReference type="OrthoDB" id="22890at10239"/>
<dbReference type="Proteomes" id="UP000029768">
    <property type="component" value="Genome"/>
</dbReference>
<dbReference type="GO" id="GO:0019029">
    <property type="term" value="C:helical viral capsid"/>
    <property type="evidence" value="ECO:0007669"/>
    <property type="project" value="UniProtKB-KW"/>
</dbReference>
<dbReference type="GO" id="GO:0030430">
    <property type="term" value="C:host cell cytoplasm"/>
    <property type="evidence" value="ECO:0007669"/>
    <property type="project" value="UniProtKB-SubCell"/>
</dbReference>
<dbReference type="GO" id="GO:1990904">
    <property type="term" value="C:ribonucleoprotein complex"/>
    <property type="evidence" value="ECO:0007669"/>
    <property type="project" value="UniProtKB-KW"/>
</dbReference>
<dbReference type="GO" id="GO:0019013">
    <property type="term" value="C:viral nucleocapsid"/>
    <property type="evidence" value="ECO:0007669"/>
    <property type="project" value="UniProtKB-KW"/>
</dbReference>
<dbReference type="GO" id="GO:0003723">
    <property type="term" value="F:RNA binding"/>
    <property type="evidence" value="ECO:0007669"/>
    <property type="project" value="UniProtKB-KW"/>
</dbReference>
<dbReference type="Gene3D" id="1.10.3610.10">
    <property type="entry name" value="Nucleoprotein"/>
    <property type="match status" value="1"/>
</dbReference>
<dbReference type="Gene3D" id="1.10.3570.10">
    <property type="entry name" value="Rhabdovirus nucleocapsid protein like domain"/>
    <property type="match status" value="1"/>
</dbReference>
<dbReference type="InterPro" id="IPR000448">
    <property type="entry name" value="Rhabdo_ncapsid"/>
</dbReference>
<dbReference type="InterPro" id="IPR023331">
    <property type="entry name" value="Rhabdovirus_ncapsid_C"/>
</dbReference>
<dbReference type="InterPro" id="IPR023330">
    <property type="entry name" value="Rhabdovirus_ncapsid_N"/>
</dbReference>
<dbReference type="InterPro" id="IPR035961">
    <property type="entry name" value="Rhabdovirus_nucleoprotein-like"/>
</dbReference>
<dbReference type="Pfam" id="PF00945">
    <property type="entry name" value="Rhabdo_ncap"/>
    <property type="match status" value="1"/>
</dbReference>
<dbReference type="SUPFAM" id="SSF140809">
    <property type="entry name" value="Rhabdovirus nucleoprotein-like"/>
    <property type="match status" value="1"/>
</dbReference>
<comment type="function">
    <text evidence="1">Encapsidates the genome, protecting it from nucleases. The encapsidated genomic RNA is termed the NC and serves as template for transcription and replication. Nucleocapsid assembly is concomitant with replication, therefore viral replication depends on the intracellular concentration of free N, termed N(0). All replicative products are resistant to nucleases.</text>
</comment>
<comment type="subunit">
    <text evidence="1">Homomultimerizes to form the nucleocapsid. Binds to viral genomic RNA. N in nucleocapsid binds the P protein and thereby positions the polymerase on the template. Interaction of N(0) with the P protein prevents the uncontrolled aggregation of N(0).</text>
</comment>
<comment type="subcellular location">
    <subcellularLocation>
        <location>Virion</location>
    </subcellularLocation>
    <subcellularLocation>
        <location>Host cytoplasm</location>
    </subcellularLocation>
    <text evidence="1">The nucleocapsid is synthesized in the cytoplasm, and is subsequently transported via microtubules to the cell periphery.</text>
</comment>
<name>NCAP_DMSVA</name>
<gene>
    <name type="primary">N</name>
</gene>
<sequence length="450" mass="50789">MEQTRLYHIDTKTEFVVRTPEFTSPVEYPFTWFTNNKTKPLFKISVMADCSLETARVAALEFLMGEKVPPSHVIDYIYEFCKTMTQELDTNWESYGQVIGKKGDTVTPLSLLHIMISQDTRKYTPKNPRLLTDEVDIYLVGNLLCSYRYNKTHEKMQTAYGTKVASILAPFSTHDTQNIRIATFLTNSKSLVDHPNFEIMASAIDMFLERFPSHGMGKLRFGTIGLRYQGCSGLVDLTYLKQILKKPGLADAIKWLFAGCLVSEVFQMMINHQDEIDVKHSYFPYMIGFKISNKSPFSAGSNPSIHTLVHLIGSLLGSPRSINAIMIEYGVISDIVVNAAIVFFAHRSDIGAKVRFGERGVMNEIHQEEDAARQRKRSAAAGGLPAVQPTDPRGWLAEYQDRDYKFTQSEVDDLNKVIQGIPQVRAGTVGEWVKLNFISNLPKGFDVTRV</sequence>
<evidence type="ECO:0000250" key="1">
    <source>
        <dbReference type="UniProtKB" id="P03521"/>
    </source>
</evidence>
<feature type="chain" id="PRO_0000432067" description="Nucleoprotein">
    <location>
        <begin position="1"/>
        <end position="450"/>
    </location>
</feature>
<organismHost>
    <name type="scientific">Drosophila melanogaster</name>
    <name type="common">Fruit fly</name>
    <dbReference type="NCBI Taxonomy" id="7227"/>
</organismHost>
<reference key="1">
    <citation type="journal article" date="2007" name="Mol. Ecol.">
        <title>The recent spread of a vertically transmitted virus through populations of Drosophila melanogaster.</title>
        <authorList>
            <person name="Carpenter J.A."/>
            <person name="Obbard D.J."/>
            <person name="Maside X."/>
            <person name="Jiggins F.M."/>
        </authorList>
    </citation>
    <scope>NUCLEOTIDE SEQUENCE [GENOMIC RNA]</scope>
    <source>
        <strain>AP30</strain>
    </source>
</reference>
<accession>A7WNA9</accession>
<organism>
    <name type="scientific">Drosophila melanogaster sigma virus (isolate Drosophila/USA/AP30/2005)</name>
    <name type="common">DMelSV</name>
    <dbReference type="NCBI Taxonomy" id="666363"/>
    <lineage>
        <taxon>Viruses</taxon>
        <taxon>Riboviria</taxon>
        <taxon>Orthornavirae</taxon>
        <taxon>Negarnaviricota</taxon>
        <taxon>Haploviricotina</taxon>
        <taxon>Monjiviricetes</taxon>
        <taxon>Mononegavirales</taxon>
        <taxon>Rhabdoviridae</taxon>
        <taxon>Alpharhabdovirinae</taxon>
        <taxon>Sigmavirus</taxon>
        <taxon>Sigmavirus melanogaster</taxon>
    </lineage>
</organism>
<proteinExistence type="inferred from homology"/>
<protein>
    <recommendedName>
        <fullName>Nucleoprotein</fullName>
        <shortName>NP</shortName>
    </recommendedName>
    <alternativeName>
        <fullName>Nucleocapsid protein</fullName>
        <shortName>Protein N</shortName>
    </alternativeName>
</protein>
<keyword id="KW-0167">Capsid protein</keyword>
<keyword id="KW-1139">Helical capsid protein</keyword>
<keyword id="KW-1035">Host cytoplasm</keyword>
<keyword id="KW-1185">Reference proteome</keyword>
<keyword id="KW-0687">Ribonucleoprotein</keyword>
<keyword id="KW-0694">RNA-binding</keyword>
<keyword id="KW-0543">Viral nucleoprotein</keyword>
<keyword id="KW-0693">Viral RNA replication</keyword>
<keyword id="KW-0946">Virion</keyword>